<feature type="chain" id="PRO_0000166446" description="Capsular polysaccharide biosynthesis protein CapF">
    <location>
        <begin position="1"/>
        <end position="396"/>
    </location>
</feature>
<feature type="transmembrane region" description="Helical" evidence="1">
    <location>
        <begin position="7"/>
        <end position="27"/>
    </location>
</feature>
<feature type="transmembrane region" description="Helical" evidence="1">
    <location>
        <begin position="41"/>
        <end position="61"/>
    </location>
</feature>
<feature type="transmembrane region" description="Helical" evidence="1">
    <location>
        <begin position="74"/>
        <end position="94"/>
    </location>
</feature>
<feature type="transmembrane region" description="Helical" evidence="1">
    <location>
        <begin position="101"/>
        <end position="121"/>
    </location>
</feature>
<feature type="transmembrane region" description="Helical" evidence="1">
    <location>
        <begin position="129"/>
        <end position="149"/>
    </location>
</feature>
<feature type="transmembrane region" description="Helical" evidence="1">
    <location>
        <begin position="153"/>
        <end position="173"/>
    </location>
</feature>
<feature type="transmembrane region" description="Helical" evidence="1">
    <location>
        <begin position="198"/>
        <end position="218"/>
    </location>
</feature>
<feature type="transmembrane region" description="Helical" evidence="1">
    <location>
        <begin position="232"/>
        <end position="252"/>
    </location>
</feature>
<feature type="transmembrane region" description="Helical" evidence="1">
    <location>
        <begin position="279"/>
        <end position="299"/>
    </location>
</feature>
<feature type="transmembrane region" description="Helical" evidence="1">
    <location>
        <begin position="315"/>
        <end position="335"/>
    </location>
</feature>
<feature type="transmembrane region" description="Helical" evidence="1">
    <location>
        <begin position="351"/>
        <end position="371"/>
    </location>
</feature>
<feature type="transmembrane region" description="Helical" evidence="1">
    <location>
        <begin position="372"/>
        <end position="392"/>
    </location>
</feature>
<name>CAPF_STAAU</name>
<sequence length="396" mass="44993">MVKNFNYMFVANILSALCKFLILLVIVRLGTPEDVGRYNYALVITAPIFLFISLKIRSVIVTNDKYSPNEYISAILSLNIITLIFVAIFVYVLGNGDLTTILIVSLIKLFENIKEVPYGIYQKNESLKLLGISMGIYNILSLILFYIIYSFSHNLNMALLFLVISCIFSFAIIDRWYLSKYYNIKLHYNNNIAKFKEIFILTIPLAFSSALGSLNTGIPRIVLENLFGKYTLGIFSTIAYVLVIGGLFANSISQVFLPKLRKLYKDEKKIEFEKLTRKMVFIGIFIGMCSVILSLFLGEALLSLLFGKEYGENNIILIILSFGLLFILSGIFLGTTIIATGKYNVNYKISLILLFCILIFSFLLIPKYSLLGAALTITISQFVALISYYYFYKRIF</sequence>
<gene>
    <name type="primary">capF</name>
</gene>
<keyword id="KW-0972">Capsule biogenesis/degradation</keyword>
<keyword id="KW-1003">Cell membrane</keyword>
<keyword id="KW-0270">Exopolysaccharide synthesis</keyword>
<keyword id="KW-0472">Membrane</keyword>
<keyword id="KW-0812">Transmembrane</keyword>
<keyword id="KW-1133">Transmembrane helix</keyword>
<reference key="1">
    <citation type="journal article" date="1994" name="J. Bacteriol.">
        <title>Sequence analysis and molecular characterization of genes required for the biosynthesis of type 1 capsular polysaccharide in Staphylococcus aureus.</title>
        <authorList>
            <person name="Lin W.S."/>
            <person name="Cunneen T."/>
            <person name="Lee C.Y."/>
        </authorList>
    </citation>
    <scope>NUCLEOTIDE SEQUENCE [GENOMIC DNA]</scope>
    <source>
        <strain>ATCC 49951 / M / NCTC 10649</strain>
    </source>
</reference>
<proteinExistence type="inferred from homology"/>
<organism>
    <name type="scientific">Staphylococcus aureus</name>
    <dbReference type="NCBI Taxonomy" id="1280"/>
    <lineage>
        <taxon>Bacteria</taxon>
        <taxon>Bacillati</taxon>
        <taxon>Bacillota</taxon>
        <taxon>Bacilli</taxon>
        <taxon>Bacillales</taxon>
        <taxon>Staphylococcaceae</taxon>
        <taxon>Staphylococcus</taxon>
    </lineage>
</organism>
<protein>
    <recommendedName>
        <fullName>Capsular polysaccharide biosynthesis protein CapF</fullName>
    </recommendedName>
</protein>
<comment type="function">
    <text>Required for the biosynthesis of type 1 capsular polysaccharide.</text>
</comment>
<comment type="pathway">
    <text>Capsule biogenesis; capsule polysaccharide biosynthesis.</text>
</comment>
<comment type="subcellular location">
    <subcellularLocation>
        <location evidence="2">Cell membrane</location>
        <topology evidence="2">Multi-pass membrane protein</topology>
    </subcellularLocation>
</comment>
<comment type="similarity">
    <text evidence="2">Belongs to the polysaccharide synthase family.</text>
</comment>
<evidence type="ECO:0000255" key="1"/>
<evidence type="ECO:0000305" key="2"/>
<dbReference type="EMBL" id="U10927">
    <property type="protein sequence ID" value="AAA64645.1"/>
    <property type="molecule type" value="Genomic_DNA"/>
</dbReference>
<dbReference type="RefSeq" id="WP_115294904.1">
    <property type="nucleotide sequence ID" value="NZ_UGZL01000001.1"/>
</dbReference>
<dbReference type="SMR" id="P39855"/>
<dbReference type="TCDB" id="2.A.66.2.5">
    <property type="family name" value="the multidrug/oligosaccharidyl-lipid/polysaccharide (mop) flippase superfamily"/>
</dbReference>
<dbReference type="UniPathway" id="UPA00934"/>
<dbReference type="GO" id="GO:0005886">
    <property type="term" value="C:plasma membrane"/>
    <property type="evidence" value="ECO:0007669"/>
    <property type="project" value="UniProtKB-SubCell"/>
</dbReference>
<dbReference type="GO" id="GO:0045227">
    <property type="term" value="P:capsule polysaccharide biosynthetic process"/>
    <property type="evidence" value="ECO:0007669"/>
    <property type="project" value="UniProtKB-UniPathway"/>
</dbReference>
<dbReference type="CDD" id="cd13128">
    <property type="entry name" value="MATE_Wzx_like"/>
    <property type="match status" value="1"/>
</dbReference>
<dbReference type="InterPro" id="IPR050833">
    <property type="entry name" value="Poly_Biosynth_Transport"/>
</dbReference>
<dbReference type="InterPro" id="IPR002797">
    <property type="entry name" value="Polysacc_synth"/>
</dbReference>
<dbReference type="PANTHER" id="PTHR30250:SF11">
    <property type="entry name" value="O-ANTIGEN TRANSPORTER-RELATED"/>
    <property type="match status" value="1"/>
</dbReference>
<dbReference type="PANTHER" id="PTHR30250">
    <property type="entry name" value="PST FAMILY PREDICTED COLANIC ACID TRANSPORTER"/>
    <property type="match status" value="1"/>
</dbReference>
<dbReference type="Pfam" id="PF01943">
    <property type="entry name" value="Polysacc_synt"/>
    <property type="match status" value="1"/>
</dbReference>
<accession>P39855</accession>